<name>HPF_DEIRA</name>
<feature type="chain" id="PRO_0000208590" description="Ribosome hibernation promotion factor">
    <location>
        <begin position="1"/>
        <end position="191"/>
    </location>
</feature>
<feature type="region of interest" description="Disordered" evidence="2">
    <location>
        <begin position="100"/>
        <end position="123"/>
    </location>
</feature>
<protein>
    <recommendedName>
        <fullName evidence="1">Ribosome hibernation promotion factor</fullName>
        <shortName evidence="1">HPF</shortName>
    </recommendedName>
</protein>
<evidence type="ECO:0000255" key="1">
    <source>
        <dbReference type="HAMAP-Rule" id="MF_00839"/>
    </source>
</evidence>
<evidence type="ECO:0000256" key="2">
    <source>
        <dbReference type="SAM" id="MobiDB-lite"/>
    </source>
</evidence>
<keyword id="KW-0963">Cytoplasm</keyword>
<keyword id="KW-0903">Direct protein sequencing</keyword>
<keyword id="KW-1185">Reference proteome</keyword>
<keyword id="KW-0810">Translation regulation</keyword>
<gene>
    <name evidence="1" type="primary">hpf</name>
    <name type="ordered locus">DR_1082</name>
</gene>
<dbReference type="EMBL" id="AE000513">
    <property type="protein sequence ID" value="AAF10654.1"/>
    <property type="molecule type" value="Genomic_DNA"/>
</dbReference>
<dbReference type="PIR" id="D75440">
    <property type="entry name" value="D75440"/>
</dbReference>
<dbReference type="RefSeq" id="NP_294806.1">
    <property type="nucleotide sequence ID" value="NC_001263.1"/>
</dbReference>
<dbReference type="RefSeq" id="WP_010887725.1">
    <property type="nucleotide sequence ID" value="NC_001263.1"/>
</dbReference>
<dbReference type="SMR" id="Q9RVE7"/>
<dbReference type="FunCoup" id="Q9RVE7">
    <property type="interactions" value="313"/>
</dbReference>
<dbReference type="STRING" id="243230.DR_1082"/>
<dbReference type="PaxDb" id="243230-DR_1082"/>
<dbReference type="EnsemblBacteria" id="AAF10654">
    <property type="protein sequence ID" value="AAF10654"/>
    <property type="gene ID" value="DR_1082"/>
</dbReference>
<dbReference type="GeneID" id="69517328"/>
<dbReference type="KEGG" id="dra:DR_1082"/>
<dbReference type="PATRIC" id="fig|243230.17.peg.1277"/>
<dbReference type="eggNOG" id="COG1544">
    <property type="taxonomic scope" value="Bacteria"/>
</dbReference>
<dbReference type="HOGENOM" id="CLU_071472_0_3_0"/>
<dbReference type="InParanoid" id="Q9RVE7"/>
<dbReference type="OrthoDB" id="9794975at2"/>
<dbReference type="Proteomes" id="UP000002524">
    <property type="component" value="Chromosome 1"/>
</dbReference>
<dbReference type="GO" id="GO:0022627">
    <property type="term" value="C:cytosolic small ribosomal subunit"/>
    <property type="evidence" value="ECO:0000318"/>
    <property type="project" value="GO_Central"/>
</dbReference>
<dbReference type="GO" id="GO:0043024">
    <property type="term" value="F:ribosomal small subunit binding"/>
    <property type="evidence" value="ECO:0000318"/>
    <property type="project" value="GO_Central"/>
</dbReference>
<dbReference type="GO" id="GO:0045900">
    <property type="term" value="P:negative regulation of translational elongation"/>
    <property type="evidence" value="ECO:0000318"/>
    <property type="project" value="GO_Central"/>
</dbReference>
<dbReference type="CDD" id="cd00552">
    <property type="entry name" value="RaiA"/>
    <property type="match status" value="1"/>
</dbReference>
<dbReference type="FunFam" id="3.30.160.100:FF:000001">
    <property type="entry name" value="Ribosome hibernation promoting factor"/>
    <property type="match status" value="1"/>
</dbReference>
<dbReference type="FunFam" id="3.30.505.50:FF:000002">
    <property type="entry name" value="Ribosome hibernation promoting factor"/>
    <property type="match status" value="1"/>
</dbReference>
<dbReference type="Gene3D" id="3.30.160.100">
    <property type="entry name" value="Ribosome hibernation promotion factor-like"/>
    <property type="match status" value="1"/>
</dbReference>
<dbReference type="Gene3D" id="3.30.505.50">
    <property type="entry name" value="Sigma 54 modulation/S30EA ribosomal protein, C-terminal domain"/>
    <property type="match status" value="1"/>
</dbReference>
<dbReference type="HAMAP" id="MF_00839">
    <property type="entry name" value="HPF"/>
    <property type="match status" value="1"/>
</dbReference>
<dbReference type="InterPro" id="IPR050574">
    <property type="entry name" value="HPF/YfiA_ribosome-assoc"/>
</dbReference>
<dbReference type="InterPro" id="IPR034694">
    <property type="entry name" value="HPF_long/plastid"/>
</dbReference>
<dbReference type="InterPro" id="IPR036567">
    <property type="entry name" value="RHF-like"/>
</dbReference>
<dbReference type="InterPro" id="IPR003489">
    <property type="entry name" value="RHF/RaiA"/>
</dbReference>
<dbReference type="InterPro" id="IPR032528">
    <property type="entry name" value="Ribosom_S30AE_C"/>
</dbReference>
<dbReference type="InterPro" id="IPR038416">
    <property type="entry name" value="Ribosom_S30AE_C_sf"/>
</dbReference>
<dbReference type="NCBIfam" id="TIGR00741">
    <property type="entry name" value="yfiA"/>
    <property type="match status" value="1"/>
</dbReference>
<dbReference type="PANTHER" id="PTHR33231">
    <property type="entry name" value="30S RIBOSOMAL PROTEIN"/>
    <property type="match status" value="1"/>
</dbReference>
<dbReference type="PANTHER" id="PTHR33231:SF1">
    <property type="entry name" value="30S RIBOSOMAL PROTEIN"/>
    <property type="match status" value="1"/>
</dbReference>
<dbReference type="Pfam" id="PF16321">
    <property type="entry name" value="Ribosom_S30AE_C"/>
    <property type="match status" value="1"/>
</dbReference>
<dbReference type="Pfam" id="PF02482">
    <property type="entry name" value="Ribosomal_S30AE"/>
    <property type="match status" value="1"/>
</dbReference>
<dbReference type="SUPFAM" id="SSF69754">
    <property type="entry name" value="Ribosome binding protein Y (YfiA homologue)"/>
    <property type="match status" value="1"/>
</dbReference>
<comment type="function">
    <text evidence="1">Required for dimerization of active 70S ribosomes into 100S ribosomes in stationary phase; 100S ribosomes are translationally inactive and sometimes present during exponential growth.</text>
</comment>
<comment type="subunit">
    <text evidence="1">Interacts with 100S ribosomes.</text>
</comment>
<comment type="subcellular location">
    <subcellularLocation>
        <location evidence="1">Cytoplasm</location>
    </subcellularLocation>
</comment>
<comment type="similarity">
    <text evidence="1">Belongs to the HPF/YfiA ribosome-associated protein family. Long HPF subfamily.</text>
</comment>
<accession>Q9RVE7</accession>
<proteinExistence type="evidence at protein level"/>
<organism>
    <name type="scientific">Deinococcus radiodurans (strain ATCC 13939 / DSM 20539 / JCM 16871 / CCUG 27074 / LMG 4051 / NBRC 15346 / NCIMB 9279 / VKM B-1422 / R1)</name>
    <dbReference type="NCBI Taxonomy" id="243230"/>
    <lineage>
        <taxon>Bacteria</taxon>
        <taxon>Thermotogati</taxon>
        <taxon>Deinococcota</taxon>
        <taxon>Deinococci</taxon>
        <taxon>Deinococcales</taxon>
        <taxon>Deinococcaceae</taxon>
        <taxon>Deinococcus</taxon>
    </lineage>
</organism>
<reference key="1">
    <citation type="journal article" date="1999" name="Science">
        <title>Genome sequence of the radioresistant bacterium Deinococcus radiodurans R1.</title>
        <authorList>
            <person name="White O."/>
            <person name="Eisen J.A."/>
            <person name="Heidelberg J.F."/>
            <person name="Hickey E.K."/>
            <person name="Peterson J.D."/>
            <person name="Dodson R.J."/>
            <person name="Haft D.H."/>
            <person name="Gwinn M.L."/>
            <person name="Nelson W.C."/>
            <person name="Richardson D.L."/>
            <person name="Moffat K.S."/>
            <person name="Qin H."/>
            <person name="Jiang L."/>
            <person name="Pamphile W."/>
            <person name="Crosby M."/>
            <person name="Shen M."/>
            <person name="Vamathevan J.J."/>
            <person name="Lam P."/>
            <person name="McDonald L.A."/>
            <person name="Utterback T.R."/>
            <person name="Zalewski C."/>
            <person name="Makarova K.S."/>
            <person name="Aravind L."/>
            <person name="Daly M.J."/>
            <person name="Minton K.W."/>
            <person name="Fleischmann R.D."/>
            <person name="Ketchum K.A."/>
            <person name="Nelson K.E."/>
            <person name="Salzberg S.L."/>
            <person name="Smith H.O."/>
            <person name="Venter J.C."/>
            <person name="Fraser C.M."/>
        </authorList>
    </citation>
    <scope>NUCLEOTIDE SEQUENCE [LARGE SCALE GENOMIC DNA]</scope>
    <source>
        <strain>ATCC 13939 / DSM 20539 / JCM 16871 / CCUG 27074 / LMG 4051 / NBRC 15346 / NCIMB 9279 / VKM B-1422 / R1</strain>
    </source>
</reference>
<reference key="2">
    <citation type="journal article" date="2004" name="Biochem. Biophys. Res. Commun.">
        <title>Protein recycling is a major component of post-irradiation recovery in Deinococcus radiodurans strain R1.</title>
        <authorList>
            <person name="Joshi B.S."/>
            <person name="Schmid R."/>
            <person name="Altendorf K."/>
            <person name="Apte S.K."/>
        </authorList>
    </citation>
    <scope>PROTEIN SEQUENCE OF 1-17</scope>
    <source>
        <strain>ATCC 13939 / DSM 20539 / JCM 16871 / CCUG 27074 / LMG 4051 / NBRC 15346 / NCIMB 9279 / VKM B-1422 / R1</strain>
    </source>
</reference>
<sequence>MQIYQLSGRNVEVTEPMREYVEEKLSRLDRYTDQITDARVTLTVRDVRNNERRNRVEVQLNVPGGIIRAEEHHADMYAAIDKASDVLERQLRKFKTRYMKQRQEGRPEPLPGPAEAEVNAQGSGAAMDDVSEFHPEIVRQKRFELRPMSAEDAVVQMEALGHDFYVFQDLQGQTGVVYRRRDGHYGLIGSS</sequence>